<dbReference type="EC" id="3.7.1.3" evidence="1"/>
<dbReference type="EMBL" id="CP000685">
    <property type="protein sequence ID" value="ABQ03541.1"/>
    <property type="molecule type" value="Genomic_DNA"/>
</dbReference>
<dbReference type="RefSeq" id="WP_012022597.1">
    <property type="nucleotide sequence ID" value="NC_009441.1"/>
</dbReference>
<dbReference type="SMR" id="A5FMM4"/>
<dbReference type="STRING" id="376686.Fjoh_0506"/>
<dbReference type="KEGG" id="fjo:Fjoh_0506"/>
<dbReference type="eggNOG" id="COG3844">
    <property type="taxonomic scope" value="Bacteria"/>
</dbReference>
<dbReference type="HOGENOM" id="CLU_003433_4_0_10"/>
<dbReference type="OrthoDB" id="9812626at2"/>
<dbReference type="UniPathway" id="UPA00253">
    <property type="reaction ID" value="UER00329"/>
</dbReference>
<dbReference type="UniPathway" id="UPA00334">
    <property type="reaction ID" value="UER00455"/>
</dbReference>
<dbReference type="Proteomes" id="UP000006694">
    <property type="component" value="Chromosome"/>
</dbReference>
<dbReference type="GO" id="GO:0005737">
    <property type="term" value="C:cytoplasm"/>
    <property type="evidence" value="ECO:0007669"/>
    <property type="project" value="InterPro"/>
</dbReference>
<dbReference type="GO" id="GO:0030429">
    <property type="term" value="F:kynureninase activity"/>
    <property type="evidence" value="ECO:0007669"/>
    <property type="project" value="UniProtKB-UniRule"/>
</dbReference>
<dbReference type="GO" id="GO:0030170">
    <property type="term" value="F:pyridoxal phosphate binding"/>
    <property type="evidence" value="ECO:0007669"/>
    <property type="project" value="UniProtKB-UniRule"/>
</dbReference>
<dbReference type="GO" id="GO:0043420">
    <property type="term" value="P:anthranilate metabolic process"/>
    <property type="evidence" value="ECO:0007669"/>
    <property type="project" value="TreeGrafter"/>
</dbReference>
<dbReference type="GO" id="GO:0097053">
    <property type="term" value="P:L-kynurenine catabolic process"/>
    <property type="evidence" value="ECO:0007669"/>
    <property type="project" value="UniProtKB-UniRule"/>
</dbReference>
<dbReference type="GO" id="GO:0019441">
    <property type="term" value="P:L-tryptophan catabolic process to kynurenine"/>
    <property type="evidence" value="ECO:0007669"/>
    <property type="project" value="TreeGrafter"/>
</dbReference>
<dbReference type="GO" id="GO:0009435">
    <property type="term" value="P:NAD biosynthetic process"/>
    <property type="evidence" value="ECO:0007669"/>
    <property type="project" value="UniProtKB-UniPathway"/>
</dbReference>
<dbReference type="GO" id="GO:0019805">
    <property type="term" value="P:quinolinate biosynthetic process"/>
    <property type="evidence" value="ECO:0007669"/>
    <property type="project" value="UniProtKB-UniRule"/>
</dbReference>
<dbReference type="FunFam" id="3.40.640.10:FF:000031">
    <property type="entry name" value="Kynureninase"/>
    <property type="match status" value="1"/>
</dbReference>
<dbReference type="Gene3D" id="3.90.1150.10">
    <property type="entry name" value="Aspartate Aminotransferase, domain 1"/>
    <property type="match status" value="1"/>
</dbReference>
<dbReference type="Gene3D" id="3.40.640.10">
    <property type="entry name" value="Type I PLP-dependent aspartate aminotransferase-like (Major domain)"/>
    <property type="match status" value="1"/>
</dbReference>
<dbReference type="HAMAP" id="MF_01970">
    <property type="entry name" value="Kynureninase"/>
    <property type="match status" value="1"/>
</dbReference>
<dbReference type="InterPro" id="IPR000192">
    <property type="entry name" value="Aminotrans_V_dom"/>
</dbReference>
<dbReference type="InterPro" id="IPR010111">
    <property type="entry name" value="Kynureninase"/>
</dbReference>
<dbReference type="InterPro" id="IPR015424">
    <property type="entry name" value="PyrdxlP-dep_Trfase"/>
</dbReference>
<dbReference type="InterPro" id="IPR015421">
    <property type="entry name" value="PyrdxlP-dep_Trfase_major"/>
</dbReference>
<dbReference type="InterPro" id="IPR015422">
    <property type="entry name" value="PyrdxlP-dep_Trfase_small"/>
</dbReference>
<dbReference type="NCBIfam" id="TIGR01814">
    <property type="entry name" value="kynureninase"/>
    <property type="match status" value="1"/>
</dbReference>
<dbReference type="PANTHER" id="PTHR14084">
    <property type="entry name" value="KYNURENINASE"/>
    <property type="match status" value="1"/>
</dbReference>
<dbReference type="PANTHER" id="PTHR14084:SF0">
    <property type="entry name" value="KYNURENINASE"/>
    <property type="match status" value="1"/>
</dbReference>
<dbReference type="Pfam" id="PF00266">
    <property type="entry name" value="Aminotran_5"/>
    <property type="match status" value="1"/>
</dbReference>
<dbReference type="Pfam" id="PF22580">
    <property type="entry name" value="KYNU_C"/>
    <property type="match status" value="1"/>
</dbReference>
<dbReference type="PIRSF" id="PIRSF038800">
    <property type="entry name" value="KYNU"/>
    <property type="match status" value="1"/>
</dbReference>
<dbReference type="SUPFAM" id="SSF53383">
    <property type="entry name" value="PLP-dependent transferases"/>
    <property type="match status" value="1"/>
</dbReference>
<comment type="function">
    <text evidence="1">Catalyzes the cleavage of L-kynurenine (L-Kyn) and L-3-hydroxykynurenine (L-3OHKyn) into anthranilic acid (AA) and 3-hydroxyanthranilic acid (3-OHAA), respectively.</text>
</comment>
<comment type="catalytic activity">
    <reaction evidence="1">
        <text>L-kynurenine + H2O = anthranilate + L-alanine + H(+)</text>
        <dbReference type="Rhea" id="RHEA:16813"/>
        <dbReference type="ChEBI" id="CHEBI:15377"/>
        <dbReference type="ChEBI" id="CHEBI:15378"/>
        <dbReference type="ChEBI" id="CHEBI:16567"/>
        <dbReference type="ChEBI" id="CHEBI:57959"/>
        <dbReference type="ChEBI" id="CHEBI:57972"/>
        <dbReference type="EC" id="3.7.1.3"/>
    </reaction>
</comment>
<comment type="catalytic activity">
    <reaction evidence="1">
        <text>3-hydroxy-L-kynurenine + H2O = 3-hydroxyanthranilate + L-alanine + H(+)</text>
        <dbReference type="Rhea" id="RHEA:25143"/>
        <dbReference type="ChEBI" id="CHEBI:15377"/>
        <dbReference type="ChEBI" id="CHEBI:15378"/>
        <dbReference type="ChEBI" id="CHEBI:36559"/>
        <dbReference type="ChEBI" id="CHEBI:57972"/>
        <dbReference type="ChEBI" id="CHEBI:58125"/>
        <dbReference type="EC" id="3.7.1.3"/>
    </reaction>
</comment>
<comment type="cofactor">
    <cofactor evidence="1">
        <name>pyridoxal 5'-phosphate</name>
        <dbReference type="ChEBI" id="CHEBI:597326"/>
    </cofactor>
</comment>
<comment type="pathway">
    <text evidence="1">Amino-acid degradation; L-kynurenine degradation; L-alanine and anthranilate from L-kynurenine: step 1/1.</text>
</comment>
<comment type="pathway">
    <text evidence="1">Cofactor biosynthesis; NAD(+) biosynthesis; quinolinate from L-kynurenine: step 2/3.</text>
</comment>
<comment type="subunit">
    <text evidence="1">Homodimer.</text>
</comment>
<comment type="similarity">
    <text evidence="1">Belongs to the kynureninase family.</text>
</comment>
<proteinExistence type="inferred from homology"/>
<feature type="chain" id="PRO_0000357005" description="Kynureninase">
    <location>
        <begin position="1"/>
        <end position="425"/>
    </location>
</feature>
<feature type="binding site" evidence="1">
    <location>
        <position position="105"/>
    </location>
    <ligand>
        <name>pyridoxal 5'-phosphate</name>
        <dbReference type="ChEBI" id="CHEBI:597326"/>
    </ligand>
</feature>
<feature type="binding site" evidence="1">
    <location>
        <position position="106"/>
    </location>
    <ligand>
        <name>pyridoxal 5'-phosphate</name>
        <dbReference type="ChEBI" id="CHEBI:597326"/>
    </ligand>
</feature>
<feature type="binding site" evidence="1">
    <location>
        <begin position="133"/>
        <end position="136"/>
    </location>
    <ligand>
        <name>pyridoxal 5'-phosphate</name>
        <dbReference type="ChEBI" id="CHEBI:597326"/>
    </ligand>
</feature>
<feature type="binding site" evidence="1">
    <location>
        <position position="218"/>
    </location>
    <ligand>
        <name>pyridoxal 5'-phosphate</name>
        <dbReference type="ChEBI" id="CHEBI:597326"/>
    </ligand>
</feature>
<feature type="binding site" evidence="1">
    <location>
        <position position="221"/>
    </location>
    <ligand>
        <name>pyridoxal 5'-phosphate</name>
        <dbReference type="ChEBI" id="CHEBI:597326"/>
    </ligand>
</feature>
<feature type="binding site" evidence="1">
    <location>
        <position position="243"/>
    </location>
    <ligand>
        <name>pyridoxal 5'-phosphate</name>
        <dbReference type="ChEBI" id="CHEBI:597326"/>
    </ligand>
</feature>
<feature type="binding site" evidence="1">
    <location>
        <position position="274"/>
    </location>
    <ligand>
        <name>pyridoxal 5'-phosphate</name>
        <dbReference type="ChEBI" id="CHEBI:597326"/>
    </ligand>
</feature>
<feature type="binding site" evidence="1">
    <location>
        <position position="302"/>
    </location>
    <ligand>
        <name>pyridoxal 5'-phosphate</name>
        <dbReference type="ChEBI" id="CHEBI:597326"/>
    </ligand>
</feature>
<feature type="modified residue" description="N6-(pyridoxal phosphate)lysine" evidence="1">
    <location>
        <position position="244"/>
    </location>
</feature>
<organism>
    <name type="scientific">Flavobacterium johnsoniae (strain ATCC 17061 / DSM 2064 / JCM 8514 / BCRC 14874 / CCUG 350202 / NBRC 14942 / NCIMB 11054 / UW101)</name>
    <name type="common">Cytophaga johnsonae</name>
    <dbReference type="NCBI Taxonomy" id="376686"/>
    <lineage>
        <taxon>Bacteria</taxon>
        <taxon>Pseudomonadati</taxon>
        <taxon>Bacteroidota</taxon>
        <taxon>Flavobacteriia</taxon>
        <taxon>Flavobacteriales</taxon>
        <taxon>Flavobacteriaceae</taxon>
        <taxon>Flavobacterium</taxon>
    </lineage>
</organism>
<name>KYNU_FLAJ1</name>
<reference key="1">
    <citation type="journal article" date="2009" name="Appl. Environ. Microbiol.">
        <title>Novel features of the polysaccharide-digesting gliding bacterium Flavobacterium johnsoniae as revealed by genome sequence analysis.</title>
        <authorList>
            <person name="McBride M.J."/>
            <person name="Xie G."/>
            <person name="Martens E.C."/>
            <person name="Lapidus A."/>
            <person name="Henrissat B."/>
            <person name="Rhodes R.G."/>
            <person name="Goltsman E."/>
            <person name="Wang W."/>
            <person name="Xu J."/>
            <person name="Hunnicutt D.W."/>
            <person name="Staroscik A.M."/>
            <person name="Hoover T.R."/>
            <person name="Cheng Y.Q."/>
            <person name="Stein J.L."/>
        </authorList>
    </citation>
    <scope>NUCLEOTIDE SEQUENCE [LARGE SCALE GENOMIC DNA]</scope>
    <source>
        <strain>ATCC 17061 / DSM 2064 / JCM 8514 / BCRC 14874 / CCUG 350202 / NBRC 14942 / NCIMB 11054 / UW101</strain>
    </source>
</reference>
<accession>A5FMM4</accession>
<sequence>MTFQNTREFAKQLDAQDALNHYQEQFIFPKVNDKRVIYFTGNSLGLQPKRTKAYIDEVMNDWAELAVEGHFYAEKPWWDYQERFSEPLSKIVGALPSEVTVMNTLTVNLHLLMVSFYQPKGKRYKIICEEKAFPSDQYMFQSQVHFHGYKPEDAIVEIKRREGEHNIRLEDVLAKIEEVGDELALVLIGGVNYYTGQVFDIKTITAAGQKAGAKVGWDLAHAAGNIKLELHDWNVDFAAWCSYKYMNSGPGNASGVFVHERHHNDPDLPRFAGWWGHNKERRFKMEPNFDPVHGAGGWQISNLPVLSLAPYLASVEMFAEVGMDALIAKRDHITSYLEFILHEIDKEVESTFEIITPSNPEERASQLSVFLHGEGRSLFDYLMKNGVITDWREPNVIRLAPVPLYCSYEDMYDFGQILKKGILGK</sequence>
<evidence type="ECO:0000255" key="1">
    <source>
        <dbReference type="HAMAP-Rule" id="MF_01970"/>
    </source>
</evidence>
<protein>
    <recommendedName>
        <fullName evidence="1">Kynureninase</fullName>
        <ecNumber evidence="1">3.7.1.3</ecNumber>
    </recommendedName>
    <alternativeName>
        <fullName evidence="1">L-kynurenine hydrolase</fullName>
    </alternativeName>
</protein>
<keyword id="KW-0378">Hydrolase</keyword>
<keyword id="KW-0662">Pyridine nucleotide biosynthesis</keyword>
<keyword id="KW-0663">Pyridoxal phosphate</keyword>
<gene>
    <name evidence="1" type="primary">kynU</name>
    <name type="ordered locus">Fjoh_0506</name>
</gene>